<keyword id="KW-0903">Direct protein sequencing</keyword>
<keyword id="KW-1015">Disulfide bond</keyword>
<keyword id="KW-0646">Protease inhibitor</keyword>
<keyword id="KW-0722">Serine protease inhibitor</keyword>
<evidence type="ECO:0000250" key="1">
    <source>
        <dbReference type="UniProtKB" id="P80321"/>
    </source>
</evidence>
<evidence type="ECO:0000305" key="2"/>
<feature type="chain" id="PRO_0000105835" description="Bowman-Birk type proteinase inhibitor B-II">
    <location>
        <begin position="1"/>
        <end position="63"/>
    </location>
</feature>
<feature type="site" description="Reactive bond for trypsin">
    <location>
        <begin position="13"/>
        <end position="14"/>
    </location>
</feature>
<feature type="site" description="Reactive bond for trypsin">
    <location>
        <begin position="41"/>
        <end position="42"/>
    </location>
</feature>
<feature type="disulfide bond" evidence="1">
    <location>
        <begin position="5"/>
        <end position="62"/>
    </location>
</feature>
<feature type="disulfide bond" evidence="1">
    <location>
        <begin position="6"/>
        <end position="23"/>
    </location>
</feature>
<feature type="disulfide bond" evidence="1">
    <location>
        <begin position="9"/>
        <end position="57"/>
    </location>
</feature>
<feature type="disulfide bond" evidence="1">
    <location>
        <begin position="11"/>
        <end position="21"/>
    </location>
</feature>
<feature type="disulfide bond" evidence="1">
    <location>
        <begin position="30"/>
        <end position="37"/>
    </location>
</feature>
<feature type="disulfide bond" evidence="1">
    <location>
        <begin position="34"/>
        <end position="49"/>
    </location>
</feature>
<feature type="disulfide bond" evidence="1">
    <location>
        <begin position="39"/>
        <end position="47"/>
    </location>
</feature>
<accession>P01067</accession>
<sequence>AASDCCSACICDRRAPPYFECTCGDTFDHCPAACNKCVCTRSIPPQCRCTDRTQGRCPLTPCA</sequence>
<proteinExistence type="evidence at protein level"/>
<organism>
    <name type="scientific">Arachis hypogaea</name>
    <name type="common">Peanut</name>
    <dbReference type="NCBI Taxonomy" id="3818"/>
    <lineage>
        <taxon>Eukaryota</taxon>
        <taxon>Viridiplantae</taxon>
        <taxon>Streptophyta</taxon>
        <taxon>Embryophyta</taxon>
        <taxon>Tracheophyta</taxon>
        <taxon>Spermatophyta</taxon>
        <taxon>Magnoliopsida</taxon>
        <taxon>eudicotyledons</taxon>
        <taxon>Gunneridae</taxon>
        <taxon>Pentapetalae</taxon>
        <taxon>rosids</taxon>
        <taxon>fabids</taxon>
        <taxon>Fabales</taxon>
        <taxon>Fabaceae</taxon>
        <taxon>Papilionoideae</taxon>
        <taxon>50 kb inversion clade</taxon>
        <taxon>dalbergioids sensu lato</taxon>
        <taxon>Dalbergieae</taxon>
        <taxon>Pterocarpus clade</taxon>
        <taxon>Arachis</taxon>
    </lineage>
</organism>
<dbReference type="PIR" id="A01306">
    <property type="entry name" value="TINPB2"/>
</dbReference>
<dbReference type="SMR" id="P01067"/>
<dbReference type="MEROPS" id="I12.006"/>
<dbReference type="MEROPS" id="I12.017"/>
<dbReference type="GO" id="GO:0005576">
    <property type="term" value="C:extracellular region"/>
    <property type="evidence" value="ECO:0007669"/>
    <property type="project" value="InterPro"/>
</dbReference>
<dbReference type="GO" id="GO:0004867">
    <property type="term" value="F:serine-type endopeptidase inhibitor activity"/>
    <property type="evidence" value="ECO:0007669"/>
    <property type="project" value="UniProtKB-KW"/>
</dbReference>
<dbReference type="CDD" id="cd00023">
    <property type="entry name" value="BBI"/>
    <property type="match status" value="1"/>
</dbReference>
<dbReference type="Gene3D" id="2.10.69.10">
    <property type="entry name" value="Cysteine Protease (Bromelain) Inhibitor, subunit H"/>
    <property type="match status" value="1"/>
</dbReference>
<dbReference type="InterPro" id="IPR035995">
    <property type="entry name" value="Bowman-Birk_prot_inh"/>
</dbReference>
<dbReference type="InterPro" id="IPR000877">
    <property type="entry name" value="Prot_inh_BBI"/>
</dbReference>
<dbReference type="Pfam" id="PF00228">
    <property type="entry name" value="Bowman-Birk_leg"/>
    <property type="match status" value="1"/>
</dbReference>
<dbReference type="SMART" id="SM00269">
    <property type="entry name" value="BowB"/>
    <property type="match status" value="1"/>
</dbReference>
<dbReference type="SUPFAM" id="SSF57247">
    <property type="entry name" value="Bowman-Birk inhibitor, BBI"/>
    <property type="match status" value="1"/>
</dbReference>
<dbReference type="PROSITE" id="PS00281">
    <property type="entry name" value="BOWMAN_BIRK"/>
    <property type="match status" value="1"/>
</dbReference>
<protein>
    <recommendedName>
        <fullName>Bowman-Birk type proteinase inhibitor B-II</fullName>
    </recommendedName>
</protein>
<comment type="miscellaneous">
    <text>One of the interaction site with trypsin probably also interacts with chymotrypsin.</text>
</comment>
<comment type="similarity">
    <text evidence="2">Belongs to the Bowman-Birk serine protease inhibitor family.</text>
</comment>
<name>IBB2_ARAHY</name>
<reference key="1">
    <citation type="journal article" date="1983" name="J. Biochem.">
        <title>Amino acid sequences of trypsin-chymotrypsin inhibitors (A-I, A-II, B-I, and B-II) from peanut (Arachis hypogaea): a discussion on the molecular evolution of legume Bowman-Birk type inhibitors.</title>
        <authorList>
            <person name="Norioka S."/>
            <person name="Ikenaka T."/>
        </authorList>
    </citation>
    <scope>PROTEIN SEQUENCE</scope>
</reference>